<sequence>MKQAWNGWLLALQLFTTIPIRRSIAWNAAHVRWLVRCMPLAGALIGALSAGVYALFSTFSFSSPLVWALLLLWLGIWMAGGMHADGFMDVSDAFFSYRDVKRRQEIMSDPRVGAFAVLSLICLLSFRWLFLYESLQTGIPPALFAAVPLLSRAGAAWLLSVGKLAKPTGMAASLREYSSWRDAIWALGLAFVLLSLLCASTAISVQTGAALAAAAVVLAAAAKPWAEKQFGGITGDVLGALIEGGETVLWGVIWLLHSSVMG</sequence>
<name>COBS_GEOKA</name>
<organism>
    <name type="scientific">Geobacillus kaustophilus (strain HTA426)</name>
    <dbReference type="NCBI Taxonomy" id="235909"/>
    <lineage>
        <taxon>Bacteria</taxon>
        <taxon>Bacillati</taxon>
        <taxon>Bacillota</taxon>
        <taxon>Bacilli</taxon>
        <taxon>Bacillales</taxon>
        <taxon>Anoxybacillaceae</taxon>
        <taxon>Geobacillus</taxon>
        <taxon>Geobacillus thermoleovorans group</taxon>
    </lineage>
</organism>
<evidence type="ECO:0000255" key="1">
    <source>
        <dbReference type="HAMAP-Rule" id="MF_00719"/>
    </source>
</evidence>
<comment type="function">
    <text evidence="1">Joins adenosylcobinamide-GDP and alpha-ribazole to generate adenosylcobalamin (Ado-cobalamin). Also synthesizes adenosylcobalamin 5'-phosphate from adenosylcobinamide-GDP and alpha-ribazole 5'-phosphate.</text>
</comment>
<comment type="catalytic activity">
    <reaction evidence="1">
        <text>alpha-ribazole + adenosylcob(III)inamide-GDP = adenosylcob(III)alamin + GMP + H(+)</text>
        <dbReference type="Rhea" id="RHEA:16049"/>
        <dbReference type="ChEBI" id="CHEBI:10329"/>
        <dbReference type="ChEBI" id="CHEBI:15378"/>
        <dbReference type="ChEBI" id="CHEBI:18408"/>
        <dbReference type="ChEBI" id="CHEBI:58115"/>
        <dbReference type="ChEBI" id="CHEBI:60487"/>
        <dbReference type="EC" id="2.7.8.26"/>
    </reaction>
</comment>
<comment type="catalytic activity">
    <reaction evidence="1">
        <text>alpha-ribazole 5'-phosphate + adenosylcob(III)inamide-GDP = adenosylcob(III)alamin 5'-phosphate + GMP + H(+)</text>
        <dbReference type="Rhea" id="RHEA:23560"/>
        <dbReference type="ChEBI" id="CHEBI:15378"/>
        <dbReference type="ChEBI" id="CHEBI:57918"/>
        <dbReference type="ChEBI" id="CHEBI:58115"/>
        <dbReference type="ChEBI" id="CHEBI:60487"/>
        <dbReference type="ChEBI" id="CHEBI:60493"/>
        <dbReference type="EC" id="2.7.8.26"/>
    </reaction>
</comment>
<comment type="cofactor">
    <cofactor evidence="1">
        <name>Mg(2+)</name>
        <dbReference type="ChEBI" id="CHEBI:18420"/>
    </cofactor>
</comment>
<comment type="pathway">
    <text evidence="1">Cofactor biosynthesis; adenosylcobalamin biosynthesis; adenosylcobalamin from cob(II)yrinate a,c-diamide: step 7/7.</text>
</comment>
<comment type="subcellular location">
    <subcellularLocation>
        <location evidence="1">Cell membrane</location>
        <topology evidence="1">Multi-pass membrane protein</topology>
    </subcellularLocation>
</comment>
<comment type="similarity">
    <text evidence="1">Belongs to the CobS family.</text>
</comment>
<gene>
    <name evidence="1" type="primary">cobS</name>
    <name type="ordered locus">GK2260</name>
</gene>
<protein>
    <recommendedName>
        <fullName evidence="1">Adenosylcobinamide-GDP ribazoletransferase</fullName>
        <ecNumber evidence="1">2.7.8.26</ecNumber>
    </recommendedName>
    <alternativeName>
        <fullName evidence="1">Cobalamin synthase</fullName>
    </alternativeName>
    <alternativeName>
        <fullName evidence="1">Cobalamin-5'-phosphate synthase</fullName>
    </alternativeName>
</protein>
<keyword id="KW-1003">Cell membrane</keyword>
<keyword id="KW-0169">Cobalamin biosynthesis</keyword>
<keyword id="KW-0460">Magnesium</keyword>
<keyword id="KW-0472">Membrane</keyword>
<keyword id="KW-1185">Reference proteome</keyword>
<keyword id="KW-0808">Transferase</keyword>
<keyword id="KW-0812">Transmembrane</keyword>
<keyword id="KW-1133">Transmembrane helix</keyword>
<proteinExistence type="inferred from homology"/>
<reference key="1">
    <citation type="journal article" date="2004" name="Nucleic Acids Res.">
        <title>Thermoadaptation trait revealed by the genome sequence of thermophilic Geobacillus kaustophilus.</title>
        <authorList>
            <person name="Takami H."/>
            <person name="Takaki Y."/>
            <person name="Chee G.-J."/>
            <person name="Nishi S."/>
            <person name="Shimamura S."/>
            <person name="Suzuki H."/>
            <person name="Matsui S."/>
            <person name="Uchiyama I."/>
        </authorList>
    </citation>
    <scope>NUCLEOTIDE SEQUENCE [LARGE SCALE GENOMIC DNA]</scope>
    <source>
        <strain>HTA426</strain>
    </source>
</reference>
<accession>Q5KXP1</accession>
<feature type="chain" id="PRO_1000045770" description="Adenosylcobinamide-GDP ribazoletransferase">
    <location>
        <begin position="1"/>
        <end position="262"/>
    </location>
</feature>
<feature type="transmembrane region" description="Helical" evidence="1">
    <location>
        <begin position="4"/>
        <end position="26"/>
    </location>
</feature>
<feature type="transmembrane region" description="Helical" evidence="1">
    <location>
        <begin position="37"/>
        <end position="57"/>
    </location>
</feature>
<feature type="transmembrane region" description="Helical" evidence="1">
    <location>
        <begin position="59"/>
        <end position="79"/>
    </location>
</feature>
<feature type="transmembrane region" description="Helical" evidence="1">
    <location>
        <begin position="112"/>
        <end position="132"/>
    </location>
</feature>
<feature type="transmembrane region" description="Helical" evidence="1">
    <location>
        <begin position="139"/>
        <end position="159"/>
    </location>
</feature>
<feature type="transmembrane region" description="Helical" evidence="1">
    <location>
        <begin position="183"/>
        <end position="203"/>
    </location>
</feature>
<feature type="transmembrane region" description="Helical" evidence="1">
    <location>
        <begin position="205"/>
        <end position="225"/>
    </location>
</feature>
<feature type="transmembrane region" description="Helical" evidence="1">
    <location>
        <begin position="237"/>
        <end position="257"/>
    </location>
</feature>
<dbReference type="EC" id="2.7.8.26" evidence="1"/>
<dbReference type="EMBL" id="BA000043">
    <property type="protein sequence ID" value="BAD76545.1"/>
    <property type="molecule type" value="Genomic_DNA"/>
</dbReference>
<dbReference type="RefSeq" id="WP_011231743.1">
    <property type="nucleotide sequence ID" value="NC_006510.1"/>
</dbReference>
<dbReference type="STRING" id="235909.GK2260"/>
<dbReference type="KEGG" id="gka:GK2260"/>
<dbReference type="eggNOG" id="COG0368">
    <property type="taxonomic scope" value="Bacteria"/>
</dbReference>
<dbReference type="HOGENOM" id="CLU_057426_1_2_9"/>
<dbReference type="UniPathway" id="UPA00148">
    <property type="reaction ID" value="UER00238"/>
</dbReference>
<dbReference type="Proteomes" id="UP000001172">
    <property type="component" value="Chromosome"/>
</dbReference>
<dbReference type="GO" id="GO:0005886">
    <property type="term" value="C:plasma membrane"/>
    <property type="evidence" value="ECO:0007669"/>
    <property type="project" value="UniProtKB-SubCell"/>
</dbReference>
<dbReference type="GO" id="GO:0051073">
    <property type="term" value="F:adenosylcobinamide-GDP ribazoletransferase activity"/>
    <property type="evidence" value="ECO:0007669"/>
    <property type="project" value="UniProtKB-UniRule"/>
</dbReference>
<dbReference type="GO" id="GO:0008818">
    <property type="term" value="F:cobalamin 5'-phosphate synthase activity"/>
    <property type="evidence" value="ECO:0007669"/>
    <property type="project" value="UniProtKB-UniRule"/>
</dbReference>
<dbReference type="GO" id="GO:0009236">
    <property type="term" value="P:cobalamin biosynthetic process"/>
    <property type="evidence" value="ECO:0007669"/>
    <property type="project" value="UniProtKB-UniRule"/>
</dbReference>
<dbReference type="HAMAP" id="MF_00719">
    <property type="entry name" value="CobS"/>
    <property type="match status" value="1"/>
</dbReference>
<dbReference type="InterPro" id="IPR003805">
    <property type="entry name" value="CobS"/>
</dbReference>
<dbReference type="PANTHER" id="PTHR34148">
    <property type="entry name" value="ADENOSYLCOBINAMIDE-GDP RIBAZOLETRANSFERASE"/>
    <property type="match status" value="1"/>
</dbReference>
<dbReference type="PANTHER" id="PTHR34148:SF1">
    <property type="entry name" value="ADENOSYLCOBINAMIDE-GDP RIBAZOLETRANSFERASE"/>
    <property type="match status" value="1"/>
</dbReference>
<dbReference type="Pfam" id="PF02654">
    <property type="entry name" value="CobS"/>
    <property type="match status" value="1"/>
</dbReference>